<feature type="chain" id="PRO_0000319887" description="Hydroxysteroid dehydrogenase-like protein 2">
    <location>
        <begin position="1"/>
        <end position="418"/>
    </location>
</feature>
<feature type="domain" description="SCP2">
    <location>
        <begin position="306"/>
        <end position="415"/>
    </location>
</feature>
<feature type="active site" description="Proton acceptor" evidence="3">
    <location>
        <position position="168"/>
    </location>
</feature>
<feature type="binding site" evidence="2">
    <location>
        <begin position="17"/>
        <end position="23"/>
    </location>
    <ligand>
        <name>NADP(+)</name>
        <dbReference type="ChEBI" id="CHEBI:58349"/>
    </ligand>
</feature>
<feature type="binding site" evidence="2">
    <location>
        <position position="42"/>
    </location>
    <ligand>
        <name>NADP(+)</name>
        <dbReference type="ChEBI" id="CHEBI:58349"/>
    </ligand>
</feature>
<feature type="binding site" evidence="2">
    <location>
        <position position="74"/>
    </location>
    <ligand>
        <name>NADP(+)</name>
        <dbReference type="ChEBI" id="CHEBI:58349"/>
    </ligand>
</feature>
<feature type="binding site" evidence="2">
    <location>
        <position position="172"/>
    </location>
    <ligand>
        <name>NADP(+)</name>
        <dbReference type="ChEBI" id="CHEBI:58349"/>
    </ligand>
</feature>
<feature type="modified residue" description="N6-(2-hydroxyisobutyryl)lysine" evidence="2">
    <location>
        <position position="42"/>
    </location>
</feature>
<feature type="modified residue" description="N6-acetyllysine" evidence="1">
    <location>
        <position position="116"/>
    </location>
</feature>
<feature type="modified residue" description="N6-succinyllysine" evidence="1">
    <location>
        <position position="318"/>
    </location>
</feature>
<keyword id="KW-0007">Acetylation</keyword>
<keyword id="KW-0379">Hydroxylation</keyword>
<keyword id="KW-0496">Mitochondrion</keyword>
<keyword id="KW-0521">NADP</keyword>
<keyword id="KW-0560">Oxidoreductase</keyword>
<keyword id="KW-0576">Peroxisome</keyword>
<keyword id="KW-1185">Reference proteome</keyword>
<name>HSDL2_BOVIN</name>
<dbReference type="EC" id="1.-.-.-"/>
<dbReference type="EMBL" id="BC123507">
    <property type="protein sequence ID" value="AAI23508.1"/>
    <property type="molecule type" value="mRNA"/>
</dbReference>
<dbReference type="EMBL" id="BC149574">
    <property type="protein sequence ID" value="AAI49575.1"/>
    <property type="status" value="ALT_INIT"/>
    <property type="molecule type" value="mRNA"/>
</dbReference>
<dbReference type="RefSeq" id="NP_001098433.1">
    <property type="nucleotide sequence ID" value="NM_001104963.1"/>
</dbReference>
<dbReference type="SMR" id="A4FUZ6"/>
<dbReference type="FunCoup" id="A4FUZ6">
    <property type="interactions" value="1377"/>
</dbReference>
<dbReference type="STRING" id="9913.ENSBTAP00000041845"/>
<dbReference type="PaxDb" id="9913-ENSBTAP00000041845"/>
<dbReference type="PeptideAtlas" id="A4FUZ6"/>
<dbReference type="Ensembl" id="ENSBTAT00000044340.4">
    <property type="protein sequence ID" value="ENSBTAP00000041845.3"/>
    <property type="gene ID" value="ENSBTAG00000031295.5"/>
</dbReference>
<dbReference type="GeneID" id="404131"/>
<dbReference type="KEGG" id="bta:404131"/>
<dbReference type="CTD" id="84263"/>
<dbReference type="VEuPathDB" id="HostDB:ENSBTAG00000031295"/>
<dbReference type="VGNC" id="VGNC:29980">
    <property type="gene designation" value="HSDL2"/>
</dbReference>
<dbReference type="eggNOG" id="KOG0725">
    <property type="taxonomic scope" value="Eukaryota"/>
</dbReference>
<dbReference type="eggNOG" id="KOG4170">
    <property type="taxonomic scope" value="Eukaryota"/>
</dbReference>
<dbReference type="GeneTree" id="ENSGT00940000156729"/>
<dbReference type="HOGENOM" id="CLU_010194_25_0_1"/>
<dbReference type="InParanoid" id="A4FUZ6"/>
<dbReference type="OMA" id="WWSSVAN"/>
<dbReference type="OrthoDB" id="5327538at2759"/>
<dbReference type="TreeFam" id="TF101523"/>
<dbReference type="Proteomes" id="UP000009136">
    <property type="component" value="Chromosome 8"/>
</dbReference>
<dbReference type="Bgee" id="ENSBTAG00000031295">
    <property type="expression patterns" value="Expressed in adult mammalian kidney and 106 other cell types or tissues"/>
</dbReference>
<dbReference type="GO" id="GO:0005739">
    <property type="term" value="C:mitochondrion"/>
    <property type="evidence" value="ECO:0000250"/>
    <property type="project" value="UniProtKB"/>
</dbReference>
<dbReference type="GO" id="GO:0005777">
    <property type="term" value="C:peroxisome"/>
    <property type="evidence" value="ECO:0007669"/>
    <property type="project" value="UniProtKB-SubCell"/>
</dbReference>
<dbReference type="GO" id="GO:0016491">
    <property type="term" value="F:oxidoreductase activity"/>
    <property type="evidence" value="ECO:0007669"/>
    <property type="project" value="UniProtKB-KW"/>
</dbReference>
<dbReference type="GO" id="GO:0042632">
    <property type="term" value="P:cholesterol homeostasis"/>
    <property type="evidence" value="ECO:0007669"/>
    <property type="project" value="Ensembl"/>
</dbReference>
<dbReference type="CDD" id="cd09762">
    <property type="entry name" value="HSDL2_SDR_c"/>
    <property type="match status" value="1"/>
</dbReference>
<dbReference type="FunFam" id="3.40.50.720:FF:000301">
    <property type="entry name" value="Hydroxysteroid dehydrogenase like 2"/>
    <property type="match status" value="1"/>
</dbReference>
<dbReference type="FunFam" id="3.30.1050.10:FF:000005">
    <property type="entry name" value="hydroxysteroid dehydrogenase-like protein 2 isoform X1"/>
    <property type="match status" value="1"/>
</dbReference>
<dbReference type="Gene3D" id="3.40.50.720">
    <property type="entry name" value="NAD(P)-binding Rossmann-like Domain"/>
    <property type="match status" value="1"/>
</dbReference>
<dbReference type="Gene3D" id="3.30.1050.10">
    <property type="entry name" value="SCP2 sterol-binding domain"/>
    <property type="match status" value="1"/>
</dbReference>
<dbReference type="InterPro" id="IPR051935">
    <property type="entry name" value="HSDL2"/>
</dbReference>
<dbReference type="InterPro" id="IPR036291">
    <property type="entry name" value="NAD(P)-bd_dom_sf"/>
</dbReference>
<dbReference type="InterPro" id="IPR003033">
    <property type="entry name" value="SCP2_sterol-bd_dom"/>
</dbReference>
<dbReference type="InterPro" id="IPR036527">
    <property type="entry name" value="SCP2_sterol-bd_dom_sf"/>
</dbReference>
<dbReference type="InterPro" id="IPR002347">
    <property type="entry name" value="SDR_fam"/>
</dbReference>
<dbReference type="NCBIfam" id="NF006133">
    <property type="entry name" value="PRK08278.1"/>
    <property type="match status" value="1"/>
</dbReference>
<dbReference type="PANTHER" id="PTHR42808">
    <property type="entry name" value="HYDROXYSTEROID DEHYDROGENASE-LIKE PROTEIN 2"/>
    <property type="match status" value="1"/>
</dbReference>
<dbReference type="PANTHER" id="PTHR42808:SF3">
    <property type="entry name" value="HYDROXYSTEROID DEHYDROGENASE-LIKE PROTEIN 2"/>
    <property type="match status" value="1"/>
</dbReference>
<dbReference type="Pfam" id="PF00106">
    <property type="entry name" value="adh_short"/>
    <property type="match status" value="1"/>
</dbReference>
<dbReference type="Pfam" id="PF02036">
    <property type="entry name" value="SCP2"/>
    <property type="match status" value="1"/>
</dbReference>
<dbReference type="PRINTS" id="PR00081">
    <property type="entry name" value="GDHRDH"/>
</dbReference>
<dbReference type="SUPFAM" id="SSF51735">
    <property type="entry name" value="NAD(P)-binding Rossmann-fold domains"/>
    <property type="match status" value="1"/>
</dbReference>
<dbReference type="SUPFAM" id="SSF55718">
    <property type="entry name" value="SCP-like"/>
    <property type="match status" value="1"/>
</dbReference>
<sequence>MLPNTGKLAGCTVFITGASRGIGKAIALKAAKDGANIVIAAKTAQAHPKLPGTIYTAAEEIKAAGGKALPCIVDVRDEEQISSAVEKAVEKFGGIDILVNNASAISLTNTLETPTKKVDLMMNVNTRGTYLTSKACIPYLKKSKVAHILNLSPPLNLNPLWFKQHCAYTIAKYGMSMCVLGMAEEFKGEIAVNALWPRTAIHTAAMDMLGGSGVESQCRKVDIMADAAYCIFKKPKSFTGNFIIDENILKEEGIKNFDVYAITPGHPLLPDFFLDEQPAMVTKKADSYGAVPELKEEKTQPPPKARSGAVEETFRIVKDSLSDDIVKATQAVYQFELSGEDGGTWFLDLKSKGGNIGYGEPSDQADVVMSMSTDDFVKMFSGKLKPTMAFMSGKLKIKGNMALAIKLEKLMNQMNSKL</sequence>
<protein>
    <recommendedName>
        <fullName>Hydroxysteroid dehydrogenase-like protein 2</fullName>
        <ecNumber>1.-.-.-</ecNumber>
    </recommendedName>
</protein>
<reference key="1">
    <citation type="submission" date="2006-09" db="EMBL/GenBank/DDBJ databases">
        <authorList>
            <consortium name="NIH - Mammalian Gene Collection (MGC) project"/>
        </authorList>
    </citation>
    <scope>NUCLEOTIDE SEQUENCE [LARGE SCALE MRNA]</scope>
    <source>
        <strain>Hereford</strain>
        <tissue>Fetal cerebellum</tissue>
        <tissue>Fetal skin</tissue>
    </source>
</reference>
<gene>
    <name type="primary">HSDL2</name>
</gene>
<accession>A4FUZ6</accession>
<accession>A6QPZ9</accession>
<comment type="function">
    <text evidence="2">Has apparently no steroid dehydrogenase activity. Controls bile acid (BA) and lipid metabolism in response to nutritional cues.</text>
</comment>
<comment type="subcellular location">
    <subcellularLocation>
        <location evidence="2">Peroxisome</location>
    </subcellularLocation>
    <subcellularLocation>
        <location evidence="2">Mitochondrion</location>
    </subcellularLocation>
</comment>
<comment type="similarity">
    <text evidence="4">Belongs to the short-chain dehydrogenases/reductases (SDR) family.</text>
</comment>
<comment type="sequence caution" evidence="4">
    <conflict type="erroneous initiation">
        <sequence resource="EMBL-CDS" id="AAI49575"/>
    </conflict>
</comment>
<evidence type="ECO:0000250" key="1">
    <source>
        <dbReference type="UniProtKB" id="Q2TPA8"/>
    </source>
</evidence>
<evidence type="ECO:0000250" key="2">
    <source>
        <dbReference type="UniProtKB" id="Q6YN16"/>
    </source>
</evidence>
<evidence type="ECO:0000255" key="3"/>
<evidence type="ECO:0000305" key="4"/>
<proteinExistence type="evidence at transcript level"/>
<organism>
    <name type="scientific">Bos taurus</name>
    <name type="common">Bovine</name>
    <dbReference type="NCBI Taxonomy" id="9913"/>
    <lineage>
        <taxon>Eukaryota</taxon>
        <taxon>Metazoa</taxon>
        <taxon>Chordata</taxon>
        <taxon>Craniata</taxon>
        <taxon>Vertebrata</taxon>
        <taxon>Euteleostomi</taxon>
        <taxon>Mammalia</taxon>
        <taxon>Eutheria</taxon>
        <taxon>Laurasiatheria</taxon>
        <taxon>Artiodactyla</taxon>
        <taxon>Ruminantia</taxon>
        <taxon>Pecora</taxon>
        <taxon>Bovidae</taxon>
        <taxon>Bovinae</taxon>
        <taxon>Bos</taxon>
    </lineage>
</organism>